<evidence type="ECO:0000255" key="1"/>
<evidence type="ECO:0000269" key="2">
    <source>
    </source>
</evidence>
<evidence type="ECO:0000303" key="3">
    <source>
    </source>
</evidence>
<evidence type="ECO:0000305" key="4"/>
<reference key="1">
    <citation type="journal article" date="2022" name="J. Nat. Prod.">
        <title>Synthetic biology-based discovery of diterpenoid pyrones from the genome of Eupenicillium shearii.</title>
        <authorList>
            <person name="Morishita Y."/>
            <person name="Tsukada K."/>
            <person name="Murakami K."/>
            <person name="Irie K."/>
            <person name="Asai T."/>
        </authorList>
    </citation>
    <scope>NUCLEOTIDE SEQUENCE [GENOMIC DNA]</scope>
    <scope>FUNCTION</scope>
    <scope>CATALYTIC ACTIVITY</scope>
    <scope>PATHWAY</scope>
    <scope>BIOTECHNOLOGY</scope>
    <source>
        <strain>IFM 42152</strain>
    </source>
</reference>
<sequence>MDEFDFNAAPPEFQEIRWMVASIFLISGTGWIVNYVTTIRTALRDRTSGVTLLSLCNNLAWETVFAVIHRPPHLIAALVITVWLLVNIYVIYVSVKFARESQDVSPLLRRHLPVVTLLGFVGFLTGHIALSMHLGPTKALYWGGMICQVTLSASALGLLIQRGHTRGASPAMWLSRFIASSFGVPGLFVRAVYWPSAWGWADNILMRWLSGVFFLLDLSYGAIYYHISRSEHEVGASGSKMSKRE</sequence>
<protein>
    <recommendedName>
        <fullName evidence="3">Terpene cyclase esdpB</fullName>
        <ecNumber evidence="2">4.2.3.-</ecNumber>
    </recommendedName>
    <alternativeName>
        <fullName evidence="3">Shearone I biosynthesis cluster protein B</fullName>
    </alternativeName>
</protein>
<gene>
    <name evidence="3" type="primary">esdpB</name>
</gene>
<keyword id="KW-0456">Lyase</keyword>
<keyword id="KW-0472">Membrane</keyword>
<keyword id="KW-0812">Transmembrane</keyword>
<keyword id="KW-1133">Transmembrane helix</keyword>
<feature type="chain" id="PRO_0000461045" description="Terpene cyclase esdpB">
    <location>
        <begin position="1"/>
        <end position="245"/>
    </location>
</feature>
<feature type="transmembrane region" description="Helical" evidence="1">
    <location>
        <begin position="19"/>
        <end position="39"/>
    </location>
</feature>
<feature type="transmembrane region" description="Helical" evidence="1">
    <location>
        <begin position="48"/>
        <end position="68"/>
    </location>
</feature>
<feature type="transmembrane region" description="Helical" evidence="1">
    <location>
        <begin position="75"/>
        <end position="95"/>
    </location>
</feature>
<feature type="transmembrane region" description="Helical" evidence="1">
    <location>
        <begin position="112"/>
        <end position="132"/>
    </location>
</feature>
<feature type="transmembrane region" description="Helical" evidence="1">
    <location>
        <begin position="140"/>
        <end position="160"/>
    </location>
</feature>
<feature type="transmembrane region" description="Helical" evidence="1">
    <location>
        <begin position="177"/>
        <end position="197"/>
    </location>
</feature>
<feature type="transmembrane region" description="Helical" evidence="1">
    <location>
        <begin position="208"/>
        <end position="228"/>
    </location>
</feature>
<accession>A0A8D5M7T9</accession>
<organism>
    <name type="scientific">Penicillium shearii</name>
    <name type="common">Eupenicillium shearii</name>
    <dbReference type="NCBI Taxonomy" id="904690"/>
    <lineage>
        <taxon>Eukaryota</taxon>
        <taxon>Fungi</taxon>
        <taxon>Dikarya</taxon>
        <taxon>Ascomycota</taxon>
        <taxon>Pezizomycotina</taxon>
        <taxon>Eurotiomycetes</taxon>
        <taxon>Eurotiomycetidae</taxon>
        <taxon>Eurotiales</taxon>
        <taxon>Aspergillaceae</taxon>
        <taxon>Penicillium</taxon>
    </lineage>
</organism>
<dbReference type="EC" id="4.2.3.-" evidence="2"/>
<dbReference type="EMBL" id="LC600199">
    <property type="protein sequence ID" value="BCP96886.1"/>
    <property type="molecule type" value="Genomic_DNA"/>
</dbReference>
<dbReference type="SMR" id="A0A8D5M7T9"/>
<dbReference type="UniPathway" id="UPA00213"/>
<dbReference type="GO" id="GO:0016020">
    <property type="term" value="C:membrane"/>
    <property type="evidence" value="ECO:0007669"/>
    <property type="project" value="UniProtKB-SubCell"/>
</dbReference>
<dbReference type="GO" id="GO:0016829">
    <property type="term" value="F:lyase activity"/>
    <property type="evidence" value="ECO:0007669"/>
    <property type="project" value="UniProtKB-KW"/>
</dbReference>
<dbReference type="InterPro" id="IPR039020">
    <property type="entry name" value="PaxB-like"/>
</dbReference>
<dbReference type="PANTHER" id="PTHR42038">
    <property type="match status" value="1"/>
</dbReference>
<dbReference type="PANTHER" id="PTHR42038:SF3">
    <property type="entry name" value="INTEGRAL MEMBRANE PROTEIN (AFU_ORTHOLOGUE AFUA_5G14600)"/>
    <property type="match status" value="1"/>
</dbReference>
<dbReference type="Pfam" id="PF25129">
    <property type="entry name" value="Pyr4-TMTC"/>
    <property type="match status" value="1"/>
</dbReference>
<proteinExistence type="evidence at protein level"/>
<comment type="function">
    <text evidence="2">Terpene cyclase; part of the cluster that mediates the biosynthesis of shearones, diterpenoid pyrones (DPs) which are structurally diverse meroterpenoids consisting of a diterpene linked by a pyrone, and which may exhibit a range of bioactivities (PubMed:35057611). Within the pathway, esdpB takes part to the biosynthesis of the molecular scaffold by catalyzing the cyclization of the prenyl group initiated by protonation and ring-opening of the epoxide to produce the diterpenoid pyrone scaffold (PubMed:35057611). The molecular scaffold is commonly biosynthesized by a series of enzymes including the non-reducing polyketide synthase (NR-PKS) esdpA that generates an alpha-pyrone; the prenyltransferase esdpC that attaches a geranylgeranyl pyrophosphate (GGPP) produced by the GGPP synthase (GGPPS) esdpD onto the pyrone unit; the FAD-dependent monooxygenase esdpE that converts an olefin on the diterpene unit into an epoxide; and the terpene cyclase esdpB that catalyzes the cyclization reactions to give the molecular backbone shearone A (PubMed:35057611). In the modification steps, esdpF oxidizes the hydroxy group to a ketone at C-3 and esdpG then attaches hydroxy groups at both C-11 and C-12. After that, esdpI hydroxylates at C-20 and esdpH hydroxylates at C-6'. The ether bridge is generated by nucleophilic attack of the hydroxy group at C-20 to the carbonyl carbon at C-3. EsdpH can also functions prior to esdpI. The different combinations of these modification enzymes lead to the production of diverse shearone derivatives, shearone I being the end product of the pathway (PubMed:35057611). The alpha-ketoglutarate-dependent dioxygenase esdpJ seems not to be involved in this pathway (PubMed:35057611).</text>
</comment>
<comment type="pathway">
    <text evidence="2">Secondary metabolite biosynthesis; terpenoid biosynthesis.</text>
</comment>
<comment type="subcellular location">
    <subcellularLocation>
        <location evidence="1">Membrane</location>
        <topology evidence="1">Multi-pass membrane protein</topology>
    </subcellularLocation>
</comment>
<comment type="biotechnology">
    <text evidence="2">Shearone derivatives produced by this cluster are interesting candidates for Alzheimer's disease (AD) therapy since they moderately inhibit aggregation of amyloid beta 42 (Abeta42).</text>
</comment>
<comment type="similarity">
    <text evidence="4">Belongs to the paxB family.</text>
</comment>
<name>ESDPB_PENSH</name>